<protein>
    <recommendedName>
        <fullName evidence="1">UDP-N-acetylmuramate--L-alanine ligase</fullName>
        <ecNumber evidence="1">6.3.2.8</ecNumber>
    </recommendedName>
    <alternativeName>
        <fullName evidence="1">UDP-N-acetylmuramoyl-L-alanine synthetase</fullName>
    </alternativeName>
</protein>
<dbReference type="EC" id="6.3.2.8" evidence="1"/>
<dbReference type="EMBL" id="AP009493">
    <property type="protein sequence ID" value="BAG18285.1"/>
    <property type="molecule type" value="Genomic_DNA"/>
</dbReference>
<dbReference type="RefSeq" id="WP_012378546.1">
    <property type="nucleotide sequence ID" value="NC_010572.1"/>
</dbReference>
<dbReference type="SMR" id="B1VWF9"/>
<dbReference type="KEGG" id="sgr:SGR_1456"/>
<dbReference type="PATRIC" id="fig|455632.4.peg.1470"/>
<dbReference type="eggNOG" id="COG0773">
    <property type="taxonomic scope" value="Bacteria"/>
</dbReference>
<dbReference type="HOGENOM" id="CLU_028104_2_1_11"/>
<dbReference type="UniPathway" id="UPA00219"/>
<dbReference type="Proteomes" id="UP000001685">
    <property type="component" value="Chromosome"/>
</dbReference>
<dbReference type="GO" id="GO:0005737">
    <property type="term" value="C:cytoplasm"/>
    <property type="evidence" value="ECO:0007669"/>
    <property type="project" value="UniProtKB-SubCell"/>
</dbReference>
<dbReference type="GO" id="GO:0005524">
    <property type="term" value="F:ATP binding"/>
    <property type="evidence" value="ECO:0007669"/>
    <property type="project" value="UniProtKB-UniRule"/>
</dbReference>
<dbReference type="GO" id="GO:0008763">
    <property type="term" value="F:UDP-N-acetylmuramate-L-alanine ligase activity"/>
    <property type="evidence" value="ECO:0007669"/>
    <property type="project" value="UniProtKB-UniRule"/>
</dbReference>
<dbReference type="GO" id="GO:0051301">
    <property type="term" value="P:cell division"/>
    <property type="evidence" value="ECO:0007669"/>
    <property type="project" value="UniProtKB-KW"/>
</dbReference>
<dbReference type="GO" id="GO:0071555">
    <property type="term" value="P:cell wall organization"/>
    <property type="evidence" value="ECO:0007669"/>
    <property type="project" value="UniProtKB-KW"/>
</dbReference>
<dbReference type="GO" id="GO:0009252">
    <property type="term" value="P:peptidoglycan biosynthetic process"/>
    <property type="evidence" value="ECO:0007669"/>
    <property type="project" value="UniProtKB-UniRule"/>
</dbReference>
<dbReference type="GO" id="GO:0008360">
    <property type="term" value="P:regulation of cell shape"/>
    <property type="evidence" value="ECO:0007669"/>
    <property type="project" value="UniProtKB-KW"/>
</dbReference>
<dbReference type="Gene3D" id="3.90.190.20">
    <property type="entry name" value="Mur ligase, C-terminal domain"/>
    <property type="match status" value="1"/>
</dbReference>
<dbReference type="Gene3D" id="3.40.1190.10">
    <property type="entry name" value="Mur-like, catalytic domain"/>
    <property type="match status" value="1"/>
</dbReference>
<dbReference type="Gene3D" id="3.40.50.720">
    <property type="entry name" value="NAD(P)-binding Rossmann-like Domain"/>
    <property type="match status" value="1"/>
</dbReference>
<dbReference type="HAMAP" id="MF_00046">
    <property type="entry name" value="MurC"/>
    <property type="match status" value="1"/>
</dbReference>
<dbReference type="InterPro" id="IPR036565">
    <property type="entry name" value="Mur-like_cat_sf"/>
</dbReference>
<dbReference type="InterPro" id="IPR004101">
    <property type="entry name" value="Mur_ligase_C"/>
</dbReference>
<dbReference type="InterPro" id="IPR036615">
    <property type="entry name" value="Mur_ligase_C_dom_sf"/>
</dbReference>
<dbReference type="InterPro" id="IPR013221">
    <property type="entry name" value="Mur_ligase_cen"/>
</dbReference>
<dbReference type="InterPro" id="IPR000713">
    <property type="entry name" value="Mur_ligase_N"/>
</dbReference>
<dbReference type="InterPro" id="IPR050061">
    <property type="entry name" value="MurCDEF_pg_biosynth"/>
</dbReference>
<dbReference type="InterPro" id="IPR005758">
    <property type="entry name" value="UDP-N-AcMur_Ala_ligase_MurC"/>
</dbReference>
<dbReference type="NCBIfam" id="TIGR01082">
    <property type="entry name" value="murC"/>
    <property type="match status" value="1"/>
</dbReference>
<dbReference type="PANTHER" id="PTHR43445:SF3">
    <property type="entry name" value="UDP-N-ACETYLMURAMATE--L-ALANINE LIGASE"/>
    <property type="match status" value="1"/>
</dbReference>
<dbReference type="PANTHER" id="PTHR43445">
    <property type="entry name" value="UDP-N-ACETYLMURAMATE--L-ALANINE LIGASE-RELATED"/>
    <property type="match status" value="1"/>
</dbReference>
<dbReference type="Pfam" id="PF01225">
    <property type="entry name" value="Mur_ligase"/>
    <property type="match status" value="1"/>
</dbReference>
<dbReference type="Pfam" id="PF02875">
    <property type="entry name" value="Mur_ligase_C"/>
    <property type="match status" value="1"/>
</dbReference>
<dbReference type="Pfam" id="PF08245">
    <property type="entry name" value="Mur_ligase_M"/>
    <property type="match status" value="1"/>
</dbReference>
<dbReference type="SUPFAM" id="SSF51984">
    <property type="entry name" value="MurCD N-terminal domain"/>
    <property type="match status" value="1"/>
</dbReference>
<dbReference type="SUPFAM" id="SSF53623">
    <property type="entry name" value="MurD-like peptide ligases, catalytic domain"/>
    <property type="match status" value="1"/>
</dbReference>
<dbReference type="SUPFAM" id="SSF53244">
    <property type="entry name" value="MurD-like peptide ligases, peptide-binding domain"/>
    <property type="match status" value="1"/>
</dbReference>
<name>MURC_STRGG</name>
<reference key="1">
    <citation type="journal article" date="2008" name="J. Bacteriol.">
        <title>Genome sequence of the streptomycin-producing microorganism Streptomyces griseus IFO 13350.</title>
        <authorList>
            <person name="Ohnishi Y."/>
            <person name="Ishikawa J."/>
            <person name="Hara H."/>
            <person name="Suzuki H."/>
            <person name="Ikenoya M."/>
            <person name="Ikeda H."/>
            <person name="Yamashita A."/>
            <person name="Hattori M."/>
            <person name="Horinouchi S."/>
        </authorList>
    </citation>
    <scope>NUCLEOTIDE SEQUENCE [LARGE SCALE GENOMIC DNA]</scope>
    <source>
        <strain>JCM 4626 / CBS 651.72 / NBRC 13350 / KCC S-0626 / ISP 5235</strain>
    </source>
</reference>
<accession>B1VWF9</accession>
<organism>
    <name type="scientific">Streptomyces griseus subsp. griseus (strain JCM 4626 / CBS 651.72 / NBRC 13350 / KCC S-0626 / ISP 5235)</name>
    <dbReference type="NCBI Taxonomy" id="455632"/>
    <lineage>
        <taxon>Bacteria</taxon>
        <taxon>Bacillati</taxon>
        <taxon>Actinomycetota</taxon>
        <taxon>Actinomycetes</taxon>
        <taxon>Kitasatosporales</taxon>
        <taxon>Streptomycetaceae</taxon>
        <taxon>Streptomyces</taxon>
    </lineage>
</organism>
<evidence type="ECO:0000255" key="1">
    <source>
        <dbReference type="HAMAP-Rule" id="MF_00046"/>
    </source>
</evidence>
<gene>
    <name evidence="1" type="primary">murC</name>
    <name type="ordered locus">SGR_1456</name>
</gene>
<proteinExistence type="inferred from homology"/>
<keyword id="KW-0067">ATP-binding</keyword>
<keyword id="KW-0131">Cell cycle</keyword>
<keyword id="KW-0132">Cell division</keyword>
<keyword id="KW-0133">Cell shape</keyword>
<keyword id="KW-0961">Cell wall biogenesis/degradation</keyword>
<keyword id="KW-0963">Cytoplasm</keyword>
<keyword id="KW-0436">Ligase</keyword>
<keyword id="KW-0547">Nucleotide-binding</keyword>
<keyword id="KW-0573">Peptidoglycan synthesis</keyword>
<feature type="chain" id="PRO_1000091139" description="UDP-N-acetylmuramate--L-alanine ligase">
    <location>
        <begin position="1"/>
        <end position="466"/>
    </location>
</feature>
<feature type="binding site" evidence="1">
    <location>
        <begin position="117"/>
        <end position="123"/>
    </location>
    <ligand>
        <name>ATP</name>
        <dbReference type="ChEBI" id="CHEBI:30616"/>
    </ligand>
</feature>
<sequence>MAPGIPAAMERPHFIGIGGAGMSGIAKILAQRGAKVAGSDAKESATAESLRALGATVHIGHAAGHLADDASCVVVSSAIRADNPELLRAGELAVPVVHRSDALASLMNGLRAIAVAGTHGKTTTTSMLAVALSSLGLAPSYAIGGDLEGPGTNATHGEGDIFVAEADESDRSFQKYDPEVAIVLNVELDHHANYASMDEIYDSFETFVGKIVPGGTLVVSADQPGAVELTRRVRDLSDLKVVTYGCAEDADVRVHKVTPRGLTSEVTVLLNGKFLTFTVSVPGAHYAHNAVAALAAGVALGIPAHNLASALGSYTGVKRRLQLKGEAAGVQVIDSYAHHPTEMTADLEAMRGAAADARILVVFQPHLFSRTQELGTEMGQALARADASVVLDIYPAREDPIPGITSALIIDAAKEAGAEVTAVHDQADVPAAVAGMAKSGDLVLTMGAGDVTDLGPRILDHLASGR</sequence>
<comment type="function">
    <text evidence="1">Cell wall formation.</text>
</comment>
<comment type="catalytic activity">
    <reaction evidence="1">
        <text>UDP-N-acetyl-alpha-D-muramate + L-alanine + ATP = UDP-N-acetyl-alpha-D-muramoyl-L-alanine + ADP + phosphate + H(+)</text>
        <dbReference type="Rhea" id="RHEA:23372"/>
        <dbReference type="ChEBI" id="CHEBI:15378"/>
        <dbReference type="ChEBI" id="CHEBI:30616"/>
        <dbReference type="ChEBI" id="CHEBI:43474"/>
        <dbReference type="ChEBI" id="CHEBI:57972"/>
        <dbReference type="ChEBI" id="CHEBI:70757"/>
        <dbReference type="ChEBI" id="CHEBI:83898"/>
        <dbReference type="ChEBI" id="CHEBI:456216"/>
        <dbReference type="EC" id="6.3.2.8"/>
    </reaction>
</comment>
<comment type="pathway">
    <text evidence="1">Cell wall biogenesis; peptidoglycan biosynthesis.</text>
</comment>
<comment type="subcellular location">
    <subcellularLocation>
        <location evidence="1">Cytoplasm</location>
    </subcellularLocation>
</comment>
<comment type="similarity">
    <text evidence="1">Belongs to the MurCDEF family.</text>
</comment>